<name>PTH2R_MOUSE</name>
<feature type="signal peptide" evidence="2">
    <location>
        <begin position="1"/>
        <end position="24"/>
    </location>
</feature>
<feature type="chain" id="PRO_0000012850" description="Parathyroid hormone 2 receptor">
    <location>
        <begin position="25"/>
        <end position="546"/>
    </location>
</feature>
<feature type="topological domain" description="Extracellular" evidence="2">
    <location>
        <begin position="27"/>
        <end position="143"/>
    </location>
</feature>
<feature type="transmembrane region" description="Helical; Name=1" evidence="2">
    <location>
        <begin position="144"/>
        <end position="167"/>
    </location>
</feature>
<feature type="topological domain" description="Cytoplasmic" evidence="2">
    <location>
        <begin position="168"/>
        <end position="174"/>
    </location>
</feature>
<feature type="transmembrane region" description="Helical; Name=2" evidence="2">
    <location>
        <begin position="175"/>
        <end position="194"/>
    </location>
</feature>
<feature type="topological domain" description="Extracellular" evidence="2">
    <location>
        <begin position="195"/>
        <end position="235"/>
    </location>
</feature>
<feature type="transmembrane region" description="Helical; Name=3" evidence="2">
    <location>
        <begin position="236"/>
        <end position="258"/>
    </location>
</feature>
<feature type="topological domain" description="Cytoplasmic" evidence="2">
    <location>
        <begin position="259"/>
        <end position="273"/>
    </location>
</feature>
<feature type="transmembrane region" description="Helical; Name=4" evidence="2">
    <location>
        <begin position="274"/>
        <end position="295"/>
    </location>
</feature>
<feature type="topological domain" description="Extracellular" evidence="2">
    <location>
        <begin position="296"/>
        <end position="313"/>
    </location>
</feature>
<feature type="transmembrane region" description="Helical; Name=5" evidence="2">
    <location>
        <begin position="314"/>
        <end position="334"/>
    </location>
</feature>
<feature type="topological domain" description="Cytoplasmic" evidence="2">
    <location>
        <begin position="335"/>
        <end position="361"/>
    </location>
</feature>
<feature type="transmembrane region" description="Helical; Name=6" evidence="2">
    <location>
        <begin position="362"/>
        <end position="380"/>
    </location>
</feature>
<feature type="topological domain" description="Extracellular" evidence="2">
    <location>
        <begin position="381"/>
        <end position="391"/>
    </location>
</feature>
<feature type="transmembrane region" description="Helical; Name=7" evidence="2">
    <location>
        <begin position="392"/>
        <end position="414"/>
    </location>
</feature>
<feature type="topological domain" description="Cytoplasmic" evidence="2">
    <location>
        <begin position="415"/>
        <end position="546"/>
    </location>
</feature>
<feature type="region of interest" description="Disordered" evidence="3">
    <location>
        <begin position="497"/>
        <end position="546"/>
    </location>
</feature>
<feature type="compositionally biased region" description="Basic and acidic residues" evidence="3">
    <location>
        <begin position="506"/>
        <end position="519"/>
    </location>
</feature>
<feature type="compositionally biased region" description="Basic and acidic residues" evidence="3">
    <location>
        <begin position="537"/>
        <end position="546"/>
    </location>
</feature>
<feature type="glycosylation site" description="N-linked (GlcNAc...) asparagine" evidence="2">
    <location>
        <position position="51"/>
    </location>
</feature>
<feature type="glycosylation site" description="N-linked (GlcNAc...) asparagine" evidence="2">
    <location>
        <position position="106"/>
    </location>
</feature>
<feature type="glycosylation site" description="N-linked (GlcNAc...) asparagine" evidence="2">
    <location>
        <position position="116"/>
    </location>
</feature>
<feature type="glycosylation site" description="N-linked (GlcNAc...) asparagine" evidence="2">
    <location>
        <position position="121"/>
    </location>
</feature>
<proteinExistence type="evidence at protein level"/>
<reference key="1">
    <citation type="journal article" date="2001" name="Mamm. Genome">
        <title>High-throughput sequence identification of gene coding variants within alcohol-related QTLs.</title>
        <authorList>
            <person name="Ehringer M.A."/>
            <person name="Thompson J."/>
            <person name="Conroy O."/>
            <person name="Xu Y."/>
            <person name="Yang F."/>
            <person name="Canniff J."/>
            <person name="Beeson M."/>
            <person name="Gordon L."/>
            <person name="Bennett B."/>
            <person name="Johnson T.E."/>
            <person name="Sikela J.M."/>
        </authorList>
    </citation>
    <scope>NUCLEOTIDE SEQUENCE [MRNA]</scope>
    <source>
        <strain>ILS</strain>
        <strain>ISS</strain>
    </source>
</reference>
<reference key="2">
    <citation type="journal article" date="2005" name="Science">
        <title>The transcriptional landscape of the mammalian genome.</title>
        <authorList>
            <person name="Carninci P."/>
            <person name="Kasukawa T."/>
            <person name="Katayama S."/>
            <person name="Gough J."/>
            <person name="Frith M.C."/>
            <person name="Maeda N."/>
            <person name="Oyama R."/>
            <person name="Ravasi T."/>
            <person name="Lenhard B."/>
            <person name="Wells C."/>
            <person name="Kodzius R."/>
            <person name="Shimokawa K."/>
            <person name="Bajic V.B."/>
            <person name="Brenner S.E."/>
            <person name="Batalov S."/>
            <person name="Forrest A.R."/>
            <person name="Zavolan M."/>
            <person name="Davis M.J."/>
            <person name="Wilming L.G."/>
            <person name="Aidinis V."/>
            <person name="Allen J.E."/>
            <person name="Ambesi-Impiombato A."/>
            <person name="Apweiler R."/>
            <person name="Aturaliya R.N."/>
            <person name="Bailey T.L."/>
            <person name="Bansal M."/>
            <person name="Baxter L."/>
            <person name="Beisel K.W."/>
            <person name="Bersano T."/>
            <person name="Bono H."/>
            <person name="Chalk A.M."/>
            <person name="Chiu K.P."/>
            <person name="Choudhary V."/>
            <person name="Christoffels A."/>
            <person name="Clutterbuck D.R."/>
            <person name="Crowe M.L."/>
            <person name="Dalla E."/>
            <person name="Dalrymple B.P."/>
            <person name="de Bono B."/>
            <person name="Della Gatta G."/>
            <person name="di Bernardo D."/>
            <person name="Down T."/>
            <person name="Engstrom P."/>
            <person name="Fagiolini M."/>
            <person name="Faulkner G."/>
            <person name="Fletcher C.F."/>
            <person name="Fukushima T."/>
            <person name="Furuno M."/>
            <person name="Futaki S."/>
            <person name="Gariboldi M."/>
            <person name="Georgii-Hemming P."/>
            <person name="Gingeras T.R."/>
            <person name="Gojobori T."/>
            <person name="Green R.E."/>
            <person name="Gustincich S."/>
            <person name="Harbers M."/>
            <person name="Hayashi Y."/>
            <person name="Hensch T.K."/>
            <person name="Hirokawa N."/>
            <person name="Hill D."/>
            <person name="Huminiecki L."/>
            <person name="Iacono M."/>
            <person name="Ikeo K."/>
            <person name="Iwama A."/>
            <person name="Ishikawa T."/>
            <person name="Jakt M."/>
            <person name="Kanapin A."/>
            <person name="Katoh M."/>
            <person name="Kawasawa Y."/>
            <person name="Kelso J."/>
            <person name="Kitamura H."/>
            <person name="Kitano H."/>
            <person name="Kollias G."/>
            <person name="Krishnan S.P."/>
            <person name="Kruger A."/>
            <person name="Kummerfeld S.K."/>
            <person name="Kurochkin I.V."/>
            <person name="Lareau L.F."/>
            <person name="Lazarevic D."/>
            <person name="Lipovich L."/>
            <person name="Liu J."/>
            <person name="Liuni S."/>
            <person name="McWilliam S."/>
            <person name="Madan Babu M."/>
            <person name="Madera M."/>
            <person name="Marchionni L."/>
            <person name="Matsuda H."/>
            <person name="Matsuzawa S."/>
            <person name="Miki H."/>
            <person name="Mignone F."/>
            <person name="Miyake S."/>
            <person name="Morris K."/>
            <person name="Mottagui-Tabar S."/>
            <person name="Mulder N."/>
            <person name="Nakano N."/>
            <person name="Nakauchi H."/>
            <person name="Ng P."/>
            <person name="Nilsson R."/>
            <person name="Nishiguchi S."/>
            <person name="Nishikawa S."/>
            <person name="Nori F."/>
            <person name="Ohara O."/>
            <person name="Okazaki Y."/>
            <person name="Orlando V."/>
            <person name="Pang K.C."/>
            <person name="Pavan W.J."/>
            <person name="Pavesi G."/>
            <person name="Pesole G."/>
            <person name="Petrovsky N."/>
            <person name="Piazza S."/>
            <person name="Reed J."/>
            <person name="Reid J.F."/>
            <person name="Ring B.Z."/>
            <person name="Ringwald M."/>
            <person name="Rost B."/>
            <person name="Ruan Y."/>
            <person name="Salzberg S.L."/>
            <person name="Sandelin A."/>
            <person name="Schneider C."/>
            <person name="Schoenbach C."/>
            <person name="Sekiguchi K."/>
            <person name="Semple C.A."/>
            <person name="Seno S."/>
            <person name="Sessa L."/>
            <person name="Sheng Y."/>
            <person name="Shibata Y."/>
            <person name="Shimada H."/>
            <person name="Shimada K."/>
            <person name="Silva D."/>
            <person name="Sinclair B."/>
            <person name="Sperling S."/>
            <person name="Stupka E."/>
            <person name="Sugiura K."/>
            <person name="Sultana R."/>
            <person name="Takenaka Y."/>
            <person name="Taki K."/>
            <person name="Tammoja K."/>
            <person name="Tan S.L."/>
            <person name="Tang S."/>
            <person name="Taylor M.S."/>
            <person name="Tegner J."/>
            <person name="Teichmann S.A."/>
            <person name="Ueda H.R."/>
            <person name="van Nimwegen E."/>
            <person name="Verardo R."/>
            <person name="Wei C.L."/>
            <person name="Yagi K."/>
            <person name="Yamanishi H."/>
            <person name="Zabarovsky E."/>
            <person name="Zhu S."/>
            <person name="Zimmer A."/>
            <person name="Hide W."/>
            <person name="Bult C."/>
            <person name="Grimmond S.M."/>
            <person name="Teasdale R.D."/>
            <person name="Liu E.T."/>
            <person name="Brusic V."/>
            <person name="Quackenbush J."/>
            <person name="Wahlestedt C."/>
            <person name="Mattick J.S."/>
            <person name="Hume D.A."/>
            <person name="Kai C."/>
            <person name="Sasaki D."/>
            <person name="Tomaru Y."/>
            <person name="Fukuda S."/>
            <person name="Kanamori-Katayama M."/>
            <person name="Suzuki M."/>
            <person name="Aoki J."/>
            <person name="Arakawa T."/>
            <person name="Iida J."/>
            <person name="Imamura K."/>
            <person name="Itoh M."/>
            <person name="Kato T."/>
            <person name="Kawaji H."/>
            <person name="Kawagashira N."/>
            <person name="Kawashima T."/>
            <person name="Kojima M."/>
            <person name="Kondo S."/>
            <person name="Konno H."/>
            <person name="Nakano K."/>
            <person name="Ninomiya N."/>
            <person name="Nishio T."/>
            <person name="Okada M."/>
            <person name="Plessy C."/>
            <person name="Shibata K."/>
            <person name="Shiraki T."/>
            <person name="Suzuki S."/>
            <person name="Tagami M."/>
            <person name="Waki K."/>
            <person name="Watahiki A."/>
            <person name="Okamura-Oho Y."/>
            <person name="Suzuki H."/>
            <person name="Kawai J."/>
            <person name="Hayashizaki Y."/>
        </authorList>
    </citation>
    <scope>NUCLEOTIDE SEQUENCE [LARGE SCALE MRNA]</scope>
    <source>
        <strain>C57BL/6J</strain>
        <tissue>Brain</tissue>
    </source>
</reference>
<reference key="3">
    <citation type="journal article" date="2002" name="Endocrinology">
        <title>Identification and characterization of the murine and human gene encoding the tuberoinfundibular peptide of 39 residues.</title>
        <authorList>
            <person name="John M.R."/>
            <person name="Arai M."/>
            <person name="Rubin D.A."/>
            <person name="Jonsson K.B."/>
            <person name="Jueppner H."/>
        </authorList>
    </citation>
    <scope>INTERACTION WITH TIPF39/TI39</scope>
</reference>
<dbReference type="EMBL" id="AF332077">
    <property type="protein sequence ID" value="AAK56105.1"/>
    <property type="molecule type" value="mRNA"/>
</dbReference>
<dbReference type="EMBL" id="AF332078">
    <property type="protein sequence ID" value="AAK56106.1"/>
    <property type="molecule type" value="mRNA"/>
</dbReference>
<dbReference type="EMBL" id="AK045576">
    <property type="protein sequence ID" value="BAC32420.1"/>
    <property type="molecule type" value="mRNA"/>
</dbReference>
<dbReference type="CCDS" id="CCDS15017.1"/>
<dbReference type="RefSeq" id="NP_644676.1">
    <property type="nucleotide sequence ID" value="NM_139270.2"/>
</dbReference>
<dbReference type="SMR" id="Q91V95"/>
<dbReference type="FunCoup" id="Q91V95">
    <property type="interactions" value="961"/>
</dbReference>
<dbReference type="STRING" id="10090.ENSMUSP00000027083"/>
<dbReference type="GlyCosmos" id="Q91V95">
    <property type="glycosylation" value="4 sites, No reported glycans"/>
</dbReference>
<dbReference type="GlyGen" id="Q91V95">
    <property type="glycosylation" value="4 sites"/>
</dbReference>
<dbReference type="PhosphoSitePlus" id="Q91V95"/>
<dbReference type="PaxDb" id="10090-ENSMUSP00000027083"/>
<dbReference type="ProteomicsDB" id="291586"/>
<dbReference type="Antibodypedia" id="20012">
    <property type="antibodies" value="214 antibodies from 28 providers"/>
</dbReference>
<dbReference type="DNASU" id="213527"/>
<dbReference type="Ensembl" id="ENSMUST00000027083.7">
    <property type="protein sequence ID" value="ENSMUSP00000027083.7"/>
    <property type="gene ID" value="ENSMUSG00000025946.14"/>
</dbReference>
<dbReference type="GeneID" id="213527"/>
<dbReference type="KEGG" id="mmu:213527"/>
<dbReference type="UCSC" id="uc007bhu.1">
    <property type="organism name" value="mouse"/>
</dbReference>
<dbReference type="AGR" id="MGI:2180917"/>
<dbReference type="CTD" id="5746"/>
<dbReference type="MGI" id="MGI:2180917">
    <property type="gene designation" value="Pth2r"/>
</dbReference>
<dbReference type="VEuPathDB" id="HostDB:ENSMUSG00000025946"/>
<dbReference type="eggNOG" id="KOG4564">
    <property type="taxonomic scope" value="Eukaryota"/>
</dbReference>
<dbReference type="GeneTree" id="ENSGT00940000159094"/>
<dbReference type="HOGENOM" id="CLU_002753_4_3_1"/>
<dbReference type="InParanoid" id="Q91V95"/>
<dbReference type="OMA" id="VDHWNKT"/>
<dbReference type="OrthoDB" id="6160250at2759"/>
<dbReference type="PhylomeDB" id="Q91V95"/>
<dbReference type="TreeFam" id="TF315710"/>
<dbReference type="Reactome" id="R-MMU-373080">
    <property type="pathway name" value="Class B/2 (Secretin family receptors)"/>
</dbReference>
<dbReference type="Reactome" id="R-MMU-418555">
    <property type="pathway name" value="G alpha (s) signalling events"/>
</dbReference>
<dbReference type="BioGRID-ORCS" id="213527">
    <property type="hits" value="0 hits in 78 CRISPR screens"/>
</dbReference>
<dbReference type="ChiTaRS" id="Pth2r">
    <property type="organism name" value="mouse"/>
</dbReference>
<dbReference type="PRO" id="PR:Q91V95"/>
<dbReference type="Proteomes" id="UP000000589">
    <property type="component" value="Chromosome 1"/>
</dbReference>
<dbReference type="RNAct" id="Q91V95">
    <property type="molecule type" value="protein"/>
</dbReference>
<dbReference type="Bgee" id="ENSMUSG00000025946">
    <property type="expression patterns" value="Expressed in medial geniculate body and 31 other cell types or tissues"/>
</dbReference>
<dbReference type="ExpressionAtlas" id="Q91V95">
    <property type="expression patterns" value="baseline and differential"/>
</dbReference>
<dbReference type="GO" id="GO:0005886">
    <property type="term" value="C:plasma membrane"/>
    <property type="evidence" value="ECO:0007669"/>
    <property type="project" value="UniProtKB-SubCell"/>
</dbReference>
<dbReference type="GO" id="GO:0004930">
    <property type="term" value="F:G protein-coupled receptor activity"/>
    <property type="evidence" value="ECO:0007669"/>
    <property type="project" value="UniProtKB-KW"/>
</dbReference>
<dbReference type="GO" id="GO:0007166">
    <property type="term" value="P:cell surface receptor signaling pathway"/>
    <property type="evidence" value="ECO:0007669"/>
    <property type="project" value="InterPro"/>
</dbReference>
<dbReference type="GO" id="GO:0120162">
    <property type="term" value="P:positive regulation of cold-induced thermogenesis"/>
    <property type="evidence" value="ECO:0000315"/>
    <property type="project" value="YuBioLab"/>
</dbReference>
<dbReference type="FunFam" id="1.20.1070.10:FF:000127">
    <property type="entry name" value="Parathyroid hormone 2 receptor"/>
    <property type="match status" value="1"/>
</dbReference>
<dbReference type="FunFam" id="4.10.1240.10:FF:000005">
    <property type="entry name" value="Parathyroid hormone/parathyroid hormone-related peptide receptor"/>
    <property type="match status" value="1"/>
</dbReference>
<dbReference type="Gene3D" id="4.10.1240.10">
    <property type="entry name" value="GPCR, family 2, extracellular hormone receptor domain"/>
    <property type="match status" value="1"/>
</dbReference>
<dbReference type="Gene3D" id="1.20.1070.10">
    <property type="entry name" value="Rhodopsin 7-helix transmembrane proteins"/>
    <property type="match status" value="1"/>
</dbReference>
<dbReference type="InterPro" id="IPR050332">
    <property type="entry name" value="GPCR_2"/>
</dbReference>
<dbReference type="InterPro" id="IPR017981">
    <property type="entry name" value="GPCR_2-like_7TM"/>
</dbReference>
<dbReference type="InterPro" id="IPR036445">
    <property type="entry name" value="GPCR_2_extracell_dom_sf"/>
</dbReference>
<dbReference type="InterPro" id="IPR001879">
    <property type="entry name" value="GPCR_2_extracellular_dom"/>
</dbReference>
<dbReference type="InterPro" id="IPR000832">
    <property type="entry name" value="GPCR_2_secretin-like"/>
</dbReference>
<dbReference type="InterPro" id="IPR017983">
    <property type="entry name" value="GPCR_2_secretin-like_CS"/>
</dbReference>
<dbReference type="PANTHER" id="PTHR45620:SF7">
    <property type="entry name" value="PARATHYROID HORMONE 2 RECEPTOR"/>
    <property type="match status" value="1"/>
</dbReference>
<dbReference type="PANTHER" id="PTHR45620">
    <property type="entry name" value="PDF RECEPTOR-LIKE PROTEIN-RELATED"/>
    <property type="match status" value="1"/>
</dbReference>
<dbReference type="Pfam" id="PF00002">
    <property type="entry name" value="7tm_2"/>
    <property type="match status" value="1"/>
</dbReference>
<dbReference type="Pfam" id="PF02793">
    <property type="entry name" value="HRM"/>
    <property type="match status" value="1"/>
</dbReference>
<dbReference type="PRINTS" id="PR00249">
    <property type="entry name" value="GPCRSECRETIN"/>
</dbReference>
<dbReference type="SMART" id="SM00008">
    <property type="entry name" value="HormR"/>
    <property type="match status" value="1"/>
</dbReference>
<dbReference type="SUPFAM" id="SSF81321">
    <property type="entry name" value="Family A G protein-coupled receptor-like"/>
    <property type="match status" value="1"/>
</dbReference>
<dbReference type="SUPFAM" id="SSF111418">
    <property type="entry name" value="Hormone receptor domain"/>
    <property type="match status" value="1"/>
</dbReference>
<dbReference type="PROSITE" id="PS00649">
    <property type="entry name" value="G_PROTEIN_RECEP_F2_1"/>
    <property type="match status" value="1"/>
</dbReference>
<dbReference type="PROSITE" id="PS00650">
    <property type="entry name" value="G_PROTEIN_RECEP_F2_2"/>
    <property type="match status" value="1"/>
</dbReference>
<dbReference type="PROSITE" id="PS50227">
    <property type="entry name" value="G_PROTEIN_RECEP_F2_3"/>
    <property type="match status" value="1"/>
</dbReference>
<dbReference type="PROSITE" id="PS50261">
    <property type="entry name" value="G_PROTEIN_RECEP_F2_4"/>
    <property type="match status" value="1"/>
</dbReference>
<evidence type="ECO:0000250" key="1"/>
<evidence type="ECO:0000255" key="2"/>
<evidence type="ECO:0000256" key="3">
    <source>
        <dbReference type="SAM" id="MobiDB-lite"/>
    </source>
</evidence>
<evidence type="ECO:0000305" key="4"/>
<accession>Q91V95</accession>
<organism>
    <name type="scientific">Mus musculus</name>
    <name type="common">Mouse</name>
    <dbReference type="NCBI Taxonomy" id="10090"/>
    <lineage>
        <taxon>Eukaryota</taxon>
        <taxon>Metazoa</taxon>
        <taxon>Chordata</taxon>
        <taxon>Craniata</taxon>
        <taxon>Vertebrata</taxon>
        <taxon>Euteleostomi</taxon>
        <taxon>Mammalia</taxon>
        <taxon>Eutheria</taxon>
        <taxon>Euarchontoglires</taxon>
        <taxon>Glires</taxon>
        <taxon>Rodentia</taxon>
        <taxon>Myomorpha</taxon>
        <taxon>Muroidea</taxon>
        <taxon>Muridae</taxon>
        <taxon>Murinae</taxon>
        <taxon>Mus</taxon>
        <taxon>Mus</taxon>
    </lineage>
</organism>
<sequence length="546" mass="61908">MAWLETFTYICGWLILSSCLLVRAQLDSDGTITIEEQIVLVMKAKMQCELNITAQLQEGEGNCFPEWDGIICWPRGTVGKMSAVPCPPYVYDFNHKGVAFRHCTPNGTWDSIHGSNKTWANYSDCFLQPDINIGKQEFFESLYILYTVGYSISFGSLAVAILIIGYFRRLHCTRNYIHLHLFVSFMLRAMSIFVKDRVAQAHLGVEALQSLVMQGDLQNFIGGPSVDKSQYVGCKIAVVMFIYFLATNYYWILVEGLYLHNLIFVSFFSDTKYLWGFISIGWGFPAVFVVAWAVARATLADTRCWELSAGDRWIYQAPILAAIGLNFILFLNTVRVLATKIWETNAVGHDMRKQYRKLAKSTLVLVLVFGVHYIVFVCQPHSFSGLWWEIRMHCELFFNSFQGFFVSIVYCYCNGEVQAEVKKMWTRWNLSIDWKRAPPCGGQRYGSVLTTVTHSTSSQSQMGASTRLVLISGKPTKNACRQIDSHVTLPGYVWSSSEQDCQTHSPPEETKEGHRRQGDDSPVMESSRPVAFTLDTEGCKGETHPI</sequence>
<keyword id="KW-1003">Cell membrane</keyword>
<keyword id="KW-0297">G-protein coupled receptor</keyword>
<keyword id="KW-0325">Glycoprotein</keyword>
<keyword id="KW-0472">Membrane</keyword>
<keyword id="KW-0675">Receptor</keyword>
<keyword id="KW-1185">Reference proteome</keyword>
<keyword id="KW-0732">Signal</keyword>
<keyword id="KW-0807">Transducer</keyword>
<keyword id="KW-0812">Transmembrane</keyword>
<keyword id="KW-1133">Transmembrane helix</keyword>
<comment type="function">
    <text evidence="1">This is a specific receptor for parathyroid hormone. The activity of this receptor is mediated by G proteins which activate adenylyl cyclase. PTH2R may be responsible for PTH effects in a number of physiological systems. It may play a significant role in pancreatic function. PTH2R presence in neurons indicates that it may function as a neurotransmitter receptor (By similarity).</text>
</comment>
<comment type="subunit">
    <text>Binds to TIPF39/TIP39.</text>
</comment>
<comment type="subcellular location">
    <subcellularLocation>
        <location>Cell membrane</location>
        <topology>Multi-pass membrane protein</topology>
    </subcellularLocation>
</comment>
<comment type="similarity">
    <text evidence="4">Belongs to the G-protein coupled receptor 2 family.</text>
</comment>
<protein>
    <recommendedName>
        <fullName>Parathyroid hormone 2 receptor</fullName>
        <shortName>PTH2 receptor</shortName>
    </recommendedName>
</protein>
<gene>
    <name type="primary">Pth2r</name>
    <name type="synonym">Pthr2</name>
</gene>